<organism>
    <name type="scientific">Arabidopsis thaliana</name>
    <name type="common">Mouse-ear cress</name>
    <dbReference type="NCBI Taxonomy" id="3702"/>
    <lineage>
        <taxon>Eukaryota</taxon>
        <taxon>Viridiplantae</taxon>
        <taxon>Streptophyta</taxon>
        <taxon>Embryophyta</taxon>
        <taxon>Tracheophyta</taxon>
        <taxon>Spermatophyta</taxon>
        <taxon>Magnoliopsida</taxon>
        <taxon>eudicotyledons</taxon>
        <taxon>Gunneridae</taxon>
        <taxon>Pentapetalae</taxon>
        <taxon>rosids</taxon>
        <taxon>malvids</taxon>
        <taxon>Brassicales</taxon>
        <taxon>Brassicaceae</taxon>
        <taxon>Camelineae</taxon>
        <taxon>Arabidopsis</taxon>
    </lineage>
</organism>
<protein>
    <recommendedName>
        <fullName evidence="9">Amidase 1</fullName>
        <shortName evidence="7">AtAMI1</shortName>
        <ecNumber evidence="1 4 6">3.5.1.4</ecNumber>
    </recommendedName>
    <alternativeName>
        <fullName evidence="10">Translocon at the outer membrane of chloroplasts 64-I</fullName>
        <shortName evidence="8">AtTOC64-I</shortName>
    </alternativeName>
</protein>
<gene>
    <name evidence="7" type="primary">AMI1</name>
    <name evidence="8" type="synonym">TOC64-I</name>
    <name evidence="11" type="ordered locus">At1g08980</name>
    <name evidence="12" type="ORF">F7G19.15</name>
</gene>
<comment type="function">
    <text evidence="1 6">Amidase involved in auxin biosynthesis. Converts indole-3-acetamide to indole-3-acetate (PubMed:12620340, PubMed:27135507). Converts phenyl-2-acetamide (PAM) to phenyl-2-acetate. Substrate preference is PAM &gt; IAM (PubMed:27135507). Can also use L-asparagine and 1-naphtalene-acetamide as substrates, but not indole-3-acetonitrile or indole-3-acetyl-L-aspartic acid (PubMed:12620340).</text>
</comment>
<comment type="catalytic activity">
    <reaction evidence="1 4 6">
        <text>a monocarboxylic acid amide + H2O = a monocarboxylate + NH4(+)</text>
        <dbReference type="Rhea" id="RHEA:12020"/>
        <dbReference type="ChEBI" id="CHEBI:15377"/>
        <dbReference type="ChEBI" id="CHEBI:28938"/>
        <dbReference type="ChEBI" id="CHEBI:35757"/>
        <dbReference type="ChEBI" id="CHEBI:83628"/>
        <dbReference type="EC" id="3.5.1.4"/>
    </reaction>
    <physiologicalReaction direction="left-to-right" evidence="1 4 6">
        <dbReference type="Rhea" id="RHEA:12021"/>
    </physiologicalReaction>
</comment>
<comment type="catalytic activity">
    <reaction evidence="1">
        <text>indole-3-acetamide + H2O = (indol-3-yl)acetate + NH4(+)</text>
        <dbReference type="Rhea" id="RHEA:34371"/>
        <dbReference type="ChEBI" id="CHEBI:15377"/>
        <dbReference type="ChEBI" id="CHEBI:16031"/>
        <dbReference type="ChEBI" id="CHEBI:28938"/>
        <dbReference type="ChEBI" id="CHEBI:30854"/>
        <dbReference type="EC" id="3.5.1.4"/>
    </reaction>
    <physiologicalReaction direction="left-to-right" evidence="1">
        <dbReference type="Rhea" id="RHEA:34372"/>
    </physiologicalReaction>
</comment>
<comment type="catalytic activity">
    <reaction evidence="6">
        <text>2-phenylacetamide + H2O = 2-phenylacetate + NH4(+)</text>
        <dbReference type="Rhea" id="RHEA:64820"/>
        <dbReference type="ChEBI" id="CHEBI:15377"/>
        <dbReference type="ChEBI" id="CHEBI:16562"/>
        <dbReference type="ChEBI" id="CHEBI:18401"/>
        <dbReference type="ChEBI" id="CHEBI:28938"/>
    </reaction>
    <physiologicalReaction direction="left-to-right" evidence="6">
        <dbReference type="Rhea" id="RHEA:64821"/>
    </physiologicalReaction>
</comment>
<comment type="catalytic activity">
    <reaction evidence="1">
        <text>L-asparagine + H2O = L-aspartate + NH4(+)</text>
        <dbReference type="Rhea" id="RHEA:21016"/>
        <dbReference type="ChEBI" id="CHEBI:15377"/>
        <dbReference type="ChEBI" id="CHEBI:28938"/>
        <dbReference type="ChEBI" id="CHEBI:29991"/>
        <dbReference type="ChEBI" id="CHEBI:58048"/>
    </reaction>
    <physiologicalReaction direction="left-to-right" evidence="1">
        <dbReference type="Rhea" id="RHEA:21017"/>
    </physiologicalReaction>
</comment>
<comment type="catalytic activity">
    <reaction evidence="1">
        <text>1-naphthaleneacetamide + H2O = 1-naphthaleneacetate + NH4(+)</text>
        <dbReference type="Rhea" id="RHEA:64824"/>
        <dbReference type="ChEBI" id="CHEBI:15377"/>
        <dbReference type="ChEBI" id="CHEBI:28938"/>
        <dbReference type="ChEBI" id="CHEBI:81810"/>
        <dbReference type="ChEBI" id="CHEBI:156230"/>
    </reaction>
    <physiologicalReaction direction="left-to-right" evidence="1">
        <dbReference type="Rhea" id="RHEA:64825"/>
    </physiologicalReaction>
</comment>
<comment type="activity regulation">
    <text evidence="4">Inhibited by phenylmethylsulfonyl fluoride (PMSF).</text>
</comment>
<comment type="biophysicochemical properties">
    <kinetics>
        <Vmax evidence="6">3.07 nmol/sec/mg enzyme with indole-3-acetamide as substrate</Vmax>
    </kinetics>
    <phDependence>
        <text evidence="1 6">Optimum pH is 7.0 (PubMed:12620340). Optimum pH is 7.5 (PubMed:27135507).</text>
    </phDependence>
    <temperatureDependence>
        <text evidence="1 6">Optimum temperature is 35-37 degrees Celsius (PubMed:12620340, PubMed:27135507). Optimum temperature is 37 degrees Celsius (PubMed:27135507).</text>
    </temperatureDependence>
</comment>
<comment type="subcellular location">
    <subcellularLocation>
        <location evidence="1 2 3 6">Cytoplasm</location>
    </subcellularLocation>
    <subcellularLocation>
        <location evidence="6">Nucleus</location>
        <location evidence="6">Nucleoplasm</location>
    </subcellularLocation>
</comment>
<comment type="tissue specificity">
    <text evidence="1 2 3 5">Expressed in cotyledons, leaves and flower buds. Lower levels in roots, stems and siliques.</text>
</comment>
<comment type="disruption phenotype">
    <text evidence="5">No visible phenotype under normal growth conditioins.</text>
</comment>
<comment type="similarity">
    <text evidence="10">Belongs to the amidase family.</text>
</comment>
<comment type="sequence caution" evidence="10">
    <conflict type="erroneous gene model prediction">
        <sequence resource="EMBL-CDS" id="AAB70409"/>
    </conflict>
</comment>
<keyword id="KW-0007">Acetylation</keyword>
<keyword id="KW-0073">Auxin biosynthesis</keyword>
<keyword id="KW-0963">Cytoplasm</keyword>
<keyword id="KW-0378">Hydrolase</keyword>
<keyword id="KW-0539">Nucleus</keyword>
<keyword id="KW-1185">Reference proteome</keyword>
<accession>Q9FR37</accession>
<accession>O04032</accession>
<evidence type="ECO:0000269" key="1">
    <source>
    </source>
</evidence>
<evidence type="ECO:0000269" key="2">
    <source>
    </source>
</evidence>
<evidence type="ECO:0000269" key="3">
    <source>
    </source>
</evidence>
<evidence type="ECO:0000269" key="4">
    <source>
    </source>
</evidence>
<evidence type="ECO:0000269" key="5">
    <source>
    </source>
</evidence>
<evidence type="ECO:0000269" key="6">
    <source>
    </source>
</evidence>
<evidence type="ECO:0000303" key="7">
    <source>
    </source>
</evidence>
<evidence type="ECO:0000303" key="8">
    <source>
    </source>
</evidence>
<evidence type="ECO:0000303" key="9">
    <source>
    </source>
</evidence>
<evidence type="ECO:0000305" key="10"/>
<evidence type="ECO:0000312" key="11">
    <source>
        <dbReference type="Araport" id="AT1G08980"/>
    </source>
</evidence>
<evidence type="ECO:0000312" key="12">
    <source>
        <dbReference type="EMBL" id="AAB70409.1"/>
    </source>
</evidence>
<evidence type="ECO:0007744" key="13">
    <source>
    </source>
</evidence>
<sequence length="425" mass="45056">MATNNDFGAFIEKVTISPTSTSSSPPSLQGLTFAIKDIFDVEGRVTGFGNPDWLRTHSAATSTAPVVSSLLEAGATALGITIMDEMAYSINGENAHYGTPRNPIAFDRVPGGSSSGSAVAVAARLVDFSIGTDTGGSVRVPASYCGIFGFRPSHGAVSTVGLTPMAQSFDTVGWFARDTATLKRVGCVLLQQHHLNPIEPSQLIIADDCFKLCSVPHDLLVQPLVGSVEKSFGGNTVVKKVNLGEYIGQNVPSLKHFMTSDDVTTQQEFCIPSLMALSSSMRLLQRHEFKINHGAWISSVKPEFGPGISERIEEAIRTSDEKIDHCRSVKSELITALSTLLGEKGVLVIPTVPGPPPHLQANVAALESFRSRAFSLLSIAGVSGFCQVSIPLGLHENLPVSVSLVAKYGSDGFLLSLVDSLAAFI</sequence>
<feature type="initiator methionine" description="Removed" evidence="13">
    <location>
        <position position="1"/>
    </location>
</feature>
<feature type="chain" id="PRO_0000414025" description="Amidase 1">
    <location>
        <begin position="2"/>
        <end position="425"/>
    </location>
</feature>
<feature type="active site" description="Charge relay system" evidence="4">
    <location>
        <position position="36"/>
    </location>
</feature>
<feature type="active site" description="Charge relay system" evidence="4">
    <location>
        <position position="113"/>
    </location>
</feature>
<feature type="active site" description="Acyl-ester intermediate" evidence="4">
    <location>
        <position position="137"/>
    </location>
</feature>
<feature type="modified residue" description="N-acetylalanine" evidence="13">
    <location>
        <position position="2"/>
    </location>
</feature>
<feature type="mutagenesis site" description="Loss of catalytic activity." evidence="4">
    <original>K</original>
    <variation>A</variation>
    <location>
        <position position="36"/>
    </location>
</feature>
<feature type="mutagenesis site" description="Reduces catalytic activity 10-fold." evidence="4">
    <original>K</original>
    <variation>R</variation>
    <location>
        <position position="36"/>
    </location>
</feature>
<feature type="mutagenesis site" description="Loss of catalytic activity." evidence="4">
    <original>S</original>
    <variation>A</variation>
    <variation>T</variation>
    <location>
        <position position="113"/>
    </location>
</feature>
<feature type="mutagenesis site" description="Loss of catalytic activity." evidence="4">
    <original>S</original>
    <variation>A</variation>
    <location>
        <position position="114"/>
    </location>
</feature>
<feature type="mutagenesis site" description="Reduces catalytic activity 400-fold." evidence="4">
    <original>S</original>
    <variation>T</variation>
    <location>
        <position position="114"/>
    </location>
</feature>
<feature type="mutagenesis site" description="Loss of catalytic activity." evidence="4">
    <original>D</original>
    <variation>A</variation>
    <location>
        <position position="133"/>
    </location>
</feature>
<feature type="mutagenesis site" description="Reduces catalytic activity 600-fold." evidence="4">
    <original>D</original>
    <variation>E</variation>
    <location>
        <position position="133"/>
    </location>
</feature>
<feature type="mutagenesis site" description="Reduces catalytic activity 170-fold." evidence="4">
    <original>S</original>
    <variation>A</variation>
    <location>
        <position position="137"/>
    </location>
</feature>
<feature type="mutagenesis site" description="Loss of catalytic activity." evidence="4">
    <original>S</original>
    <variation>T</variation>
    <location>
        <position position="137"/>
    </location>
</feature>
<feature type="mutagenesis site" description="Reduces catalytic activity 10-fold." evidence="4">
    <original>C</original>
    <variation>A</variation>
    <variation>S</variation>
    <location>
        <position position="145"/>
    </location>
</feature>
<feature type="mutagenesis site" description="Slightly reduces catalytic activity." evidence="4">
    <original>S</original>
    <variation>T</variation>
    <location>
        <position position="214"/>
    </location>
</feature>
<name>AMI1_ARATH</name>
<reference key="1">
    <citation type="submission" date="1999-11" db="EMBL/GenBank/DDBJ databases">
        <title>Cloning and characterization of an amidase gene from Arabidopsis thaliana.</title>
        <authorList>
            <person name="Chang W.Z."/>
            <person name="So M.W."/>
            <person name="Soll D."/>
        </authorList>
    </citation>
    <scope>NUCLEOTIDE SEQUENCE [MRNA]</scope>
</reference>
<reference key="2">
    <citation type="journal article" date="2000" name="Nature">
        <title>Sequence and analysis of chromosome 1 of the plant Arabidopsis thaliana.</title>
        <authorList>
            <person name="Theologis A."/>
            <person name="Ecker J.R."/>
            <person name="Palm C.J."/>
            <person name="Federspiel N.A."/>
            <person name="Kaul S."/>
            <person name="White O."/>
            <person name="Alonso J."/>
            <person name="Altafi H."/>
            <person name="Araujo R."/>
            <person name="Bowman C.L."/>
            <person name="Brooks S.Y."/>
            <person name="Buehler E."/>
            <person name="Chan A."/>
            <person name="Chao Q."/>
            <person name="Chen H."/>
            <person name="Cheuk R.F."/>
            <person name="Chin C.W."/>
            <person name="Chung M.K."/>
            <person name="Conn L."/>
            <person name="Conway A.B."/>
            <person name="Conway A.R."/>
            <person name="Creasy T.H."/>
            <person name="Dewar K."/>
            <person name="Dunn P."/>
            <person name="Etgu P."/>
            <person name="Feldblyum T.V."/>
            <person name="Feng J.-D."/>
            <person name="Fong B."/>
            <person name="Fujii C.Y."/>
            <person name="Gill J.E."/>
            <person name="Goldsmith A.D."/>
            <person name="Haas B."/>
            <person name="Hansen N.F."/>
            <person name="Hughes B."/>
            <person name="Huizar L."/>
            <person name="Hunter J.L."/>
            <person name="Jenkins J."/>
            <person name="Johnson-Hopson C."/>
            <person name="Khan S."/>
            <person name="Khaykin E."/>
            <person name="Kim C.J."/>
            <person name="Koo H.L."/>
            <person name="Kremenetskaia I."/>
            <person name="Kurtz D.B."/>
            <person name="Kwan A."/>
            <person name="Lam B."/>
            <person name="Langin-Hooper S."/>
            <person name="Lee A."/>
            <person name="Lee J.M."/>
            <person name="Lenz C.A."/>
            <person name="Li J.H."/>
            <person name="Li Y.-P."/>
            <person name="Lin X."/>
            <person name="Liu S.X."/>
            <person name="Liu Z.A."/>
            <person name="Luros J.S."/>
            <person name="Maiti R."/>
            <person name="Marziali A."/>
            <person name="Militscher J."/>
            <person name="Miranda M."/>
            <person name="Nguyen M."/>
            <person name="Nierman W.C."/>
            <person name="Osborne B.I."/>
            <person name="Pai G."/>
            <person name="Peterson J."/>
            <person name="Pham P.K."/>
            <person name="Rizzo M."/>
            <person name="Rooney T."/>
            <person name="Rowley D."/>
            <person name="Sakano H."/>
            <person name="Salzberg S.L."/>
            <person name="Schwartz J.R."/>
            <person name="Shinn P."/>
            <person name="Southwick A.M."/>
            <person name="Sun H."/>
            <person name="Tallon L.J."/>
            <person name="Tambunga G."/>
            <person name="Toriumi M.J."/>
            <person name="Town C.D."/>
            <person name="Utterback T."/>
            <person name="Van Aken S."/>
            <person name="Vaysberg M."/>
            <person name="Vysotskaia V.S."/>
            <person name="Walker M."/>
            <person name="Wu D."/>
            <person name="Yu G."/>
            <person name="Fraser C.M."/>
            <person name="Venter J.C."/>
            <person name="Davis R.W."/>
        </authorList>
    </citation>
    <scope>NUCLEOTIDE SEQUENCE [LARGE SCALE GENOMIC DNA]</scope>
    <source>
        <strain>cv. Columbia</strain>
    </source>
</reference>
<reference key="3">
    <citation type="journal article" date="2017" name="Plant J.">
        <title>Araport11: a complete reannotation of the Arabidopsis thaliana reference genome.</title>
        <authorList>
            <person name="Cheng C.Y."/>
            <person name="Krishnakumar V."/>
            <person name="Chan A.P."/>
            <person name="Thibaud-Nissen F."/>
            <person name="Schobel S."/>
            <person name="Town C.D."/>
        </authorList>
    </citation>
    <scope>GENOME REANNOTATION</scope>
    <source>
        <strain>cv. Columbia</strain>
    </source>
</reference>
<reference key="4">
    <citation type="journal article" date="2003" name="Science">
        <title>Empirical analysis of transcriptional activity in the Arabidopsis genome.</title>
        <authorList>
            <person name="Yamada K."/>
            <person name="Lim J."/>
            <person name="Dale J.M."/>
            <person name="Chen H."/>
            <person name="Shinn P."/>
            <person name="Palm C.J."/>
            <person name="Southwick A.M."/>
            <person name="Wu H.C."/>
            <person name="Kim C.J."/>
            <person name="Nguyen M."/>
            <person name="Pham P.K."/>
            <person name="Cheuk R.F."/>
            <person name="Karlin-Newmann G."/>
            <person name="Liu S.X."/>
            <person name="Lam B."/>
            <person name="Sakano H."/>
            <person name="Wu T."/>
            <person name="Yu G."/>
            <person name="Miranda M."/>
            <person name="Quach H.L."/>
            <person name="Tripp M."/>
            <person name="Chang C.H."/>
            <person name="Lee J.M."/>
            <person name="Toriumi M.J."/>
            <person name="Chan M.M."/>
            <person name="Tang C.C."/>
            <person name="Onodera C.S."/>
            <person name="Deng J.M."/>
            <person name="Akiyama K."/>
            <person name="Ansari Y."/>
            <person name="Arakawa T."/>
            <person name="Banh J."/>
            <person name="Banno F."/>
            <person name="Bowser L."/>
            <person name="Brooks S.Y."/>
            <person name="Carninci P."/>
            <person name="Chao Q."/>
            <person name="Choy N."/>
            <person name="Enju A."/>
            <person name="Goldsmith A.D."/>
            <person name="Gurjal M."/>
            <person name="Hansen N.F."/>
            <person name="Hayashizaki Y."/>
            <person name="Johnson-Hopson C."/>
            <person name="Hsuan V.W."/>
            <person name="Iida K."/>
            <person name="Karnes M."/>
            <person name="Khan S."/>
            <person name="Koesema E."/>
            <person name="Ishida J."/>
            <person name="Jiang P.X."/>
            <person name="Jones T."/>
            <person name="Kawai J."/>
            <person name="Kamiya A."/>
            <person name="Meyers C."/>
            <person name="Nakajima M."/>
            <person name="Narusaka M."/>
            <person name="Seki M."/>
            <person name="Sakurai T."/>
            <person name="Satou M."/>
            <person name="Tamse R."/>
            <person name="Vaysberg M."/>
            <person name="Wallender E.K."/>
            <person name="Wong C."/>
            <person name="Yamamura Y."/>
            <person name="Yuan S."/>
            <person name="Shinozaki K."/>
            <person name="Davis R.W."/>
            <person name="Theologis A."/>
            <person name="Ecker J.R."/>
        </authorList>
    </citation>
    <scope>NUCLEOTIDE SEQUENCE [LARGE SCALE MRNA]</scope>
    <source>
        <strain>cv. Columbia</strain>
    </source>
</reference>
<reference key="5">
    <citation type="journal article" date="2003" name="Phytochemistry">
        <title>Molecular cloning and characterization of an amidase from Arabidopsis thaliana capable of converting indole-3-acetamide into the plant growth hormone, indole-3-acetic acid.</title>
        <authorList>
            <person name="Pollmann S."/>
            <person name="Neu D."/>
            <person name="Weiler E.W."/>
        </authorList>
    </citation>
    <scope>FUNCTION</scope>
    <scope>CATALYTIC ACTIVITY</scope>
    <scope>BIOPHYSICOCHEMICAL PROPERTIES</scope>
    <scope>TISSUE SPECIFICITY</scope>
    <scope>SUBCELLULAR LOCATION</scope>
</reference>
<reference key="6">
    <citation type="journal article" date="2004" name="FEBS Lett.">
        <title>A plant outer mitochondrial membrane protein with high amino acid sequence identity to a chloroplast protein import receptor.</title>
        <authorList>
            <person name="Chew O."/>
            <person name="Lister R."/>
            <person name="Qbadou S."/>
            <person name="Heazlewood J.L."/>
            <person name="Soll J."/>
            <person name="Schleiff E."/>
            <person name="Millar A.H."/>
            <person name="Whelan J."/>
        </authorList>
    </citation>
    <scope>SUBCELLULAR LOCATION</scope>
    <scope>TISSUE SPECIFICITY</scope>
</reference>
<reference key="7">
    <citation type="journal article" date="2006" name="Planta">
        <title>Subcellular localization and tissue specific expression of amidase 1 from Arabidopsis thaliana.</title>
        <authorList>
            <person name="Pollmann S."/>
            <person name="Neu D."/>
            <person name="Lehmann T."/>
            <person name="Berkowitz O."/>
            <person name="Schaefer T."/>
            <person name="Weiler E.W."/>
        </authorList>
    </citation>
    <scope>SUBCELLULAR LOCATION</scope>
    <scope>TISSUE SPECIFICITY</scope>
</reference>
<reference key="8">
    <citation type="journal article" date="2007" name="FEBS J.">
        <title>Arabidopsis amidase 1, a member of the amidase signature family.</title>
        <authorList>
            <person name="Neu D."/>
            <person name="Lehmann T."/>
            <person name="Elleuche S."/>
            <person name="Pollmann S."/>
        </authorList>
    </citation>
    <scope>CATALYTIC ACTIVITY</scope>
    <scope>ACTIVITY REGULATION</scope>
    <scope>ACTIVE SITE</scope>
    <scope>MUTAGENESIS OF LYS-36; SER-113; SER-114; ASP-133; SER-137; CYS-145 AND SER-214</scope>
</reference>
<reference key="9">
    <citation type="journal article" date="2007" name="Plant J.">
        <title>Toc64/OEP64 is not essential for the efficient import of proteins into chloroplasts in Arabidopsis thaliana.</title>
        <authorList>
            <person name="Aronsson H."/>
            <person name="Boij P."/>
            <person name="Patel R."/>
            <person name="Wardle A."/>
            <person name="Toepel M."/>
            <person name="Jarvis P."/>
        </authorList>
    </citation>
    <scope>TISSUE SPECIFICITY</scope>
    <scope>DISRUPTION PHENOTYPE</scope>
</reference>
<reference key="10">
    <citation type="journal article" date="2012" name="Mol. Cell. Proteomics">
        <title>Comparative large-scale characterisation of plant vs. mammal proteins reveals similar and idiosyncratic N-alpha acetylation features.</title>
        <authorList>
            <person name="Bienvenut W.V."/>
            <person name="Sumpton D."/>
            <person name="Martinez A."/>
            <person name="Lilla S."/>
            <person name="Espagne C."/>
            <person name="Meinnel T."/>
            <person name="Giglione C."/>
        </authorList>
    </citation>
    <scope>ACETYLATION [LARGE SCALE ANALYSIS] AT ALA-2</scope>
    <scope>CLEAVAGE OF INITIATOR METHIONINE [LARGE SCALE ANALYSIS]</scope>
    <scope>IDENTIFICATION BY MASS SPECTROMETRY [LARGE SCALE ANALYSIS]</scope>
</reference>
<reference key="11">
    <citation type="journal article" date="2014" name="Plants (Basel)">
        <title>Characterization of four bifunctional plant IAM/PAM-amidohydrolases capable of contributing to auxin biosynthesis.</title>
        <authorList>
            <person name="Sanchez-Parra B."/>
            <person name="Frerigmann H."/>
            <person name="Alonso M.M."/>
            <person name="Loba V.C."/>
            <person name="Jost R."/>
            <person name="Hentrich M."/>
            <person name="Pollmann S."/>
        </authorList>
    </citation>
    <scope>FUNCTION</scope>
    <scope>CATALYTIC ACTIVITY</scope>
    <scope>BIOPHYSICOCHEMICAL PROPERTIES</scope>
    <scope>SUBCELLULAR LOCATION</scope>
</reference>
<proteinExistence type="evidence at protein level"/>
<dbReference type="EC" id="3.5.1.4" evidence="1 4 6"/>
<dbReference type="EMBL" id="AF202077">
    <property type="protein sequence ID" value="AAG35612.1"/>
    <property type="molecule type" value="mRNA"/>
</dbReference>
<dbReference type="EMBL" id="AC000106">
    <property type="protein sequence ID" value="AAB70409.1"/>
    <property type="status" value="ALT_SEQ"/>
    <property type="molecule type" value="Genomic_DNA"/>
</dbReference>
<dbReference type="EMBL" id="CP002684">
    <property type="protein sequence ID" value="AEE28378.1"/>
    <property type="molecule type" value="Genomic_DNA"/>
</dbReference>
<dbReference type="EMBL" id="AY037198">
    <property type="protein sequence ID" value="AAK59783.1"/>
    <property type="molecule type" value="mRNA"/>
</dbReference>
<dbReference type="EMBL" id="BT004554">
    <property type="protein sequence ID" value="AAO42800.1"/>
    <property type="molecule type" value="mRNA"/>
</dbReference>
<dbReference type="PIR" id="F86221">
    <property type="entry name" value="F86221"/>
</dbReference>
<dbReference type="RefSeq" id="NP_563831.1">
    <property type="nucleotide sequence ID" value="NM_100769.4"/>
</dbReference>
<dbReference type="SMR" id="Q9FR37"/>
<dbReference type="FunCoup" id="Q9FR37">
    <property type="interactions" value="570"/>
</dbReference>
<dbReference type="STRING" id="3702.Q9FR37"/>
<dbReference type="iPTMnet" id="Q9FR37"/>
<dbReference type="PaxDb" id="3702-AT1G08980.1"/>
<dbReference type="ProteomicsDB" id="245071"/>
<dbReference type="EnsemblPlants" id="AT1G08980.1">
    <property type="protein sequence ID" value="AT1G08980.1"/>
    <property type="gene ID" value="AT1G08980"/>
</dbReference>
<dbReference type="GeneID" id="837418"/>
<dbReference type="Gramene" id="AT1G08980.1">
    <property type="protein sequence ID" value="AT1G08980.1"/>
    <property type="gene ID" value="AT1G08980"/>
</dbReference>
<dbReference type="KEGG" id="ath:AT1G08980"/>
<dbReference type="Araport" id="AT1G08980"/>
<dbReference type="TAIR" id="AT1G08980">
    <property type="gene designation" value="AMI1"/>
</dbReference>
<dbReference type="eggNOG" id="KOG1211">
    <property type="taxonomic scope" value="Eukaryota"/>
</dbReference>
<dbReference type="HOGENOM" id="CLU_009600_17_0_1"/>
<dbReference type="InParanoid" id="Q9FR37"/>
<dbReference type="OMA" id="WGLRTTH"/>
<dbReference type="OrthoDB" id="245563at2759"/>
<dbReference type="PhylomeDB" id="Q9FR37"/>
<dbReference type="BioCyc" id="ARA:AT1G08980-MONOMER"/>
<dbReference type="BioCyc" id="MetaCyc:AT1G08980-MONOMER"/>
<dbReference type="PRO" id="PR:Q9FR37"/>
<dbReference type="Proteomes" id="UP000006548">
    <property type="component" value="Chromosome 1"/>
</dbReference>
<dbReference type="ExpressionAtlas" id="Q9FR37">
    <property type="expression patterns" value="baseline and differential"/>
</dbReference>
<dbReference type="GO" id="GO:0005737">
    <property type="term" value="C:cytoplasm"/>
    <property type="evidence" value="ECO:0000314"/>
    <property type="project" value="TAIR"/>
</dbReference>
<dbReference type="GO" id="GO:0005829">
    <property type="term" value="C:cytosol"/>
    <property type="evidence" value="ECO:0007005"/>
    <property type="project" value="TAIR"/>
</dbReference>
<dbReference type="GO" id="GO:0005576">
    <property type="term" value="C:extracellular region"/>
    <property type="evidence" value="ECO:0007005"/>
    <property type="project" value="TAIR"/>
</dbReference>
<dbReference type="GO" id="GO:0005654">
    <property type="term" value="C:nucleoplasm"/>
    <property type="evidence" value="ECO:0000314"/>
    <property type="project" value="UniProtKB"/>
</dbReference>
<dbReference type="GO" id="GO:0004040">
    <property type="term" value="F:amidase activity"/>
    <property type="evidence" value="ECO:0000314"/>
    <property type="project" value="TAIR"/>
</dbReference>
<dbReference type="GO" id="GO:0004067">
    <property type="term" value="F:asparaginase activity"/>
    <property type="evidence" value="ECO:0007669"/>
    <property type="project" value="RHEA"/>
</dbReference>
<dbReference type="GO" id="GO:0016810">
    <property type="term" value="F:hydrolase activity, acting on carbon-nitrogen (but not peptide) bonds"/>
    <property type="evidence" value="ECO:0000314"/>
    <property type="project" value="TAIR"/>
</dbReference>
<dbReference type="GO" id="GO:0043864">
    <property type="term" value="F:indoleacetamide hydrolase activity"/>
    <property type="evidence" value="ECO:0000314"/>
    <property type="project" value="TAIR"/>
</dbReference>
<dbReference type="GO" id="GO:0009851">
    <property type="term" value="P:auxin biosynthetic process"/>
    <property type="evidence" value="ECO:0000314"/>
    <property type="project" value="UniProtKB"/>
</dbReference>
<dbReference type="GO" id="GO:0009684">
    <property type="term" value="P:indoleacetic acid biosynthetic process"/>
    <property type="evidence" value="ECO:0000314"/>
    <property type="project" value="TAIR"/>
</dbReference>
<dbReference type="FunFam" id="3.90.1300.10:FF:000004">
    <property type="entry name" value="Outer envelope protein 64, mitochondrial"/>
    <property type="match status" value="1"/>
</dbReference>
<dbReference type="Gene3D" id="3.90.1300.10">
    <property type="entry name" value="Amidase signature (AS) domain"/>
    <property type="match status" value="1"/>
</dbReference>
<dbReference type="InterPro" id="IPR020556">
    <property type="entry name" value="Amidase_CS"/>
</dbReference>
<dbReference type="InterPro" id="IPR023631">
    <property type="entry name" value="Amidase_dom"/>
</dbReference>
<dbReference type="InterPro" id="IPR036928">
    <property type="entry name" value="AS_sf"/>
</dbReference>
<dbReference type="PANTHER" id="PTHR46310">
    <property type="entry name" value="AMIDASE 1"/>
    <property type="match status" value="1"/>
</dbReference>
<dbReference type="PANTHER" id="PTHR46310:SF7">
    <property type="entry name" value="AMIDASE 1"/>
    <property type="match status" value="1"/>
</dbReference>
<dbReference type="Pfam" id="PF01425">
    <property type="entry name" value="Amidase"/>
    <property type="match status" value="1"/>
</dbReference>
<dbReference type="SUPFAM" id="SSF75304">
    <property type="entry name" value="Amidase signature (AS) enzymes"/>
    <property type="match status" value="1"/>
</dbReference>
<dbReference type="PROSITE" id="PS00571">
    <property type="entry name" value="AMIDASES"/>
    <property type="match status" value="1"/>
</dbReference>